<reference key="1">
    <citation type="journal article" date="1999" name="Am. Heart J.">
        <title>Molecular biology of Chlamydia pneumoniae surface proteins and their role in immunopathogenicity.</title>
        <authorList>
            <person name="Christiansen G."/>
            <person name="Boesen T."/>
            <person name="Hjerno K."/>
            <person name="Daugaard L."/>
            <person name="Mygind P."/>
            <person name="Madsen A.S."/>
            <person name="Knudsen K."/>
            <person name="Falk E."/>
            <person name="Birkelund S."/>
        </authorList>
    </citation>
    <scope>NUCLEOTIDE SEQUENCE [GENOMIC DNA]</scope>
    <source>
        <strain>CWL029 / VR1310</strain>
    </source>
</reference>
<reference key="2">
    <citation type="journal article" date="1999" name="Nat. Genet.">
        <title>Comparative genomes of Chlamydia pneumoniae and C. trachomatis.</title>
        <authorList>
            <person name="Kalman S."/>
            <person name="Mitchell W.P."/>
            <person name="Marathe R."/>
            <person name="Lammel C.J."/>
            <person name="Fan J."/>
            <person name="Hyman R.W."/>
            <person name="Olinger L."/>
            <person name="Grimwood J."/>
            <person name="Davis R.W."/>
            <person name="Stephens R.S."/>
        </authorList>
    </citation>
    <scope>NUCLEOTIDE SEQUENCE [LARGE SCALE GENOMIC DNA]</scope>
    <source>
        <strain>CWL029</strain>
    </source>
</reference>
<reference key="3">
    <citation type="journal article" date="2000" name="Nucleic Acids Res.">
        <title>Genome sequences of Chlamydia trachomatis MoPn and Chlamydia pneumoniae AR39.</title>
        <authorList>
            <person name="Read T.D."/>
            <person name="Brunham R.C."/>
            <person name="Shen C."/>
            <person name="Gill S.R."/>
            <person name="Heidelberg J.F."/>
            <person name="White O."/>
            <person name="Hickey E.K."/>
            <person name="Peterson J.D."/>
            <person name="Utterback T.R."/>
            <person name="Berry K.J."/>
            <person name="Bass S."/>
            <person name="Linher K.D."/>
            <person name="Weidman J.F."/>
            <person name="Khouri H.M."/>
            <person name="Craven B."/>
            <person name="Bowman C."/>
            <person name="Dodson R.J."/>
            <person name="Gwinn M.L."/>
            <person name="Nelson W.C."/>
            <person name="DeBoy R.T."/>
            <person name="Kolonay J.F."/>
            <person name="McClarty G."/>
            <person name="Salzberg S.L."/>
            <person name="Eisen J.A."/>
            <person name="Fraser C.M."/>
        </authorList>
    </citation>
    <scope>NUCLEOTIDE SEQUENCE [LARGE SCALE GENOMIC DNA]</scope>
    <source>
        <strain>AR39</strain>
    </source>
</reference>
<reference key="4">
    <citation type="journal article" date="2000" name="Nucleic Acids Res.">
        <title>Comparison of whole genome sequences of Chlamydia pneumoniae J138 from Japan and CWL029 from USA.</title>
        <authorList>
            <person name="Shirai M."/>
            <person name="Hirakawa H."/>
            <person name="Kimoto M."/>
            <person name="Tabuchi M."/>
            <person name="Kishi F."/>
            <person name="Ouchi K."/>
            <person name="Shiba T."/>
            <person name="Ishii K."/>
            <person name="Hattori M."/>
            <person name="Kuhara S."/>
            <person name="Nakazawa T."/>
        </authorList>
    </citation>
    <scope>NUCLEOTIDE SEQUENCE [LARGE SCALE GENOMIC DNA]</scope>
    <source>
        <strain>J138</strain>
    </source>
</reference>
<reference key="5">
    <citation type="submission" date="2002-05" db="EMBL/GenBank/DDBJ databases">
        <title>The genome sequence of Chlamydia pneumoniae TW183 and comparison with other Chlamydia strains based on whole genome sequence analysis.</title>
        <authorList>
            <person name="Geng M.M."/>
            <person name="Schuhmacher A."/>
            <person name="Muehldorfer I."/>
            <person name="Bensch K.W."/>
            <person name="Schaefer K.P."/>
            <person name="Schneider S."/>
            <person name="Pohl T."/>
            <person name="Essig A."/>
            <person name="Marre R."/>
            <person name="Melchers K."/>
        </authorList>
    </citation>
    <scope>NUCLEOTIDE SEQUENCE [LARGE SCALE GENOMIC DNA]</scope>
    <source>
        <strain>TW-183</strain>
    </source>
</reference>
<accession>Q9Z393</accession>
<accession>Q9RB66</accession>
<proteinExistence type="evidence at transcript level"/>
<dbReference type="EMBL" id="AJ133034">
    <property type="protein sequence ID" value="CAB37068.1"/>
    <property type="molecule type" value="Genomic_DNA"/>
</dbReference>
<dbReference type="EMBL" id="AE001363">
    <property type="protein sequence ID" value="AAD18590.1"/>
    <property type="molecule type" value="Genomic_DNA"/>
</dbReference>
<dbReference type="EMBL" id="AE002161">
    <property type="protein sequence ID" value="AAF38164.1"/>
    <property type="molecule type" value="Genomic_DNA"/>
</dbReference>
<dbReference type="EMBL" id="BA000008">
    <property type="protein sequence ID" value="BAA98654.1"/>
    <property type="molecule type" value="Genomic_DNA"/>
</dbReference>
<dbReference type="EMBL" id="AE009440">
    <property type="protein sequence ID" value="AAP98394.1"/>
    <property type="molecule type" value="Genomic_DNA"/>
</dbReference>
<dbReference type="PIR" id="A81591">
    <property type="entry name" value="A81591"/>
</dbReference>
<dbReference type="PIR" id="D72078">
    <property type="entry name" value="D72078"/>
</dbReference>
<dbReference type="PIR" id="D86546">
    <property type="entry name" value="D86546"/>
</dbReference>
<dbReference type="RefSeq" id="NP_224646.1">
    <property type="nucleotide sequence ID" value="NC_000922.1"/>
</dbReference>
<dbReference type="RefSeq" id="WP_010883089.1">
    <property type="nucleotide sequence ID" value="NZ_LN847257.1"/>
</dbReference>
<dbReference type="RefSeq" id="WP_010892028.1">
    <property type="nucleotide sequence ID" value="NZ_LN846995.1"/>
</dbReference>
<dbReference type="STRING" id="406984.CPK_ORF00959"/>
<dbReference type="GeneID" id="45050493"/>
<dbReference type="KEGG" id="cpa:CP_0307"/>
<dbReference type="KEGG" id="cpj:pmp_8"/>
<dbReference type="KEGG" id="cpn:CPn_0446"/>
<dbReference type="KEGG" id="cpt:CpB0463"/>
<dbReference type="PATRIC" id="fig|115713.3.peg.495"/>
<dbReference type="eggNOG" id="COG3468">
    <property type="taxonomic scope" value="Bacteria"/>
</dbReference>
<dbReference type="HOGENOM" id="CLU_004549_1_1_0"/>
<dbReference type="OrthoDB" id="16650at2"/>
<dbReference type="Proteomes" id="UP000000583">
    <property type="component" value="Chromosome"/>
</dbReference>
<dbReference type="Proteomes" id="UP000000801">
    <property type="component" value="Chromosome"/>
</dbReference>
<dbReference type="GO" id="GO:0009279">
    <property type="term" value="C:cell outer membrane"/>
    <property type="evidence" value="ECO:0007669"/>
    <property type="project" value="UniProtKB-SubCell"/>
</dbReference>
<dbReference type="GO" id="GO:0005576">
    <property type="term" value="C:extracellular region"/>
    <property type="evidence" value="ECO:0007669"/>
    <property type="project" value="UniProtKB-KW"/>
</dbReference>
<dbReference type="Gene3D" id="2.40.128.130">
    <property type="entry name" value="Autotransporter beta-domain"/>
    <property type="match status" value="1"/>
</dbReference>
<dbReference type="InterPro" id="IPR005546">
    <property type="entry name" value="Autotransporte_beta"/>
</dbReference>
<dbReference type="InterPro" id="IPR036709">
    <property type="entry name" value="Autotransporte_beta_dom_sf"/>
</dbReference>
<dbReference type="InterPro" id="IPR011427">
    <property type="entry name" value="Polymorphic_membr_middle"/>
</dbReference>
<dbReference type="InterPro" id="IPR003368">
    <property type="entry name" value="POMP_repeat"/>
</dbReference>
<dbReference type="NCBIfam" id="TIGR01376">
    <property type="entry name" value="POMP_repeat"/>
    <property type="match status" value="4"/>
</dbReference>
<dbReference type="Pfam" id="PF02415">
    <property type="entry name" value="Chlam_PMP"/>
    <property type="match status" value="3"/>
</dbReference>
<dbReference type="Pfam" id="PF07548">
    <property type="entry name" value="ChlamPMP_M"/>
    <property type="match status" value="1"/>
</dbReference>
<dbReference type="SMART" id="SM00869">
    <property type="entry name" value="Autotransporter"/>
    <property type="match status" value="1"/>
</dbReference>
<dbReference type="SUPFAM" id="SSF103515">
    <property type="entry name" value="Autotransporter"/>
    <property type="match status" value="1"/>
</dbReference>
<dbReference type="PROSITE" id="PS51208">
    <property type="entry name" value="AUTOTRANSPORTER"/>
    <property type="match status" value="1"/>
</dbReference>
<gene>
    <name type="primary">pmp8</name>
    <name type="synonym">omp11</name>
    <name type="ordered locus">CPn_0446</name>
    <name type="ordered locus">CP_0307</name>
    <name type="ordered locus">CpB0463</name>
</gene>
<evidence type="ECO:0000255" key="1"/>
<evidence type="ECO:0000255" key="2">
    <source>
        <dbReference type="PROSITE-ProRule" id="PRU00556"/>
    </source>
</evidence>
<evidence type="ECO:0000305" key="3"/>
<sequence>MKIPLHKLLISSTLVTPILLSIATYGADASLSPTDSFDGAGGSTFTPKSTADANGTNYVLSGNVYINDAGKGTALTGCCFTETTGDLTFTGKGYSFSFNTVDAGSNAGAAASTTADKALTFTGFSNLSFIAAPGTTVASGKSTLSSAGALNLTDNGTILFSQNVSNEANNNGGAITTKTLSISGNTSSITFTSNSAKKLGGAIYSSAAASISGNTGQLVFMNNKGETGGGALGFEASSSITQNSSLFFSGNTATDAAGKGGAIYCEKTGETPTLTISGNKSLTFAENSSVTQGGAICAHGLDLSAAGPTLFSNNRCGNTAAGKGGAIAIADSGSLSLSANQGDITFLGNTLTSTSAPTSTRNAIYLGSSAKITNLRAAQGQSIYFYDPIASNTTGASDVLTINQPDSNSPLDYSGTIVFSGEKLSADEAKAADNFTSILKQPLALASGTLALKGNVELDVNGFTQTEGSTLLMQPGTKLKADTEAISLTKLVVDLSALEGNKSVSIETAGANKTITLTSPLVFQDSSGNFYESHTINQAFTQPLVVFTAATAASDIYIDALLTSPVQTPEPHYGYQGHWEATWADTSTAKSGTMTWVTTGYNPNPERRASVVPDSLWASFTDIRTLQQIMTSQANSIYQQRGLWASGTANFFHKDKSGTNQAFRHKSYGYIVGGSAEDFSENIFSVAFCQLFGKDKDLFIVENTSHNYLASLYLQHRAFLGGLPMPSFGSITDMLKDIPLILNAQLSYSYTKNDMDTRYTSYPEAQGSWTNNSGALELGGSLALYLPKEAPFFQGYFPFLKFQAVYSRQQNFKESGAEARAFDDGDLVNCSIPVGIRLEKISEDEKNNFEISLAYIGDVYRKNPRSRTSLMVSGASWTSLCKNLARQAFLASAGSHLTLSPHVELSGEAAYELRGSAHIYNVDCGLRYSF</sequence>
<name>PMP8_CHLPN</name>
<protein>
    <recommendedName>
        <fullName>Probable outer membrane protein pmp8</fullName>
    </recommendedName>
    <alternativeName>
        <fullName>Outer membrane protein 11</fullName>
    </alternativeName>
    <alternativeName>
        <fullName>Polymorphic membrane protein 8</fullName>
    </alternativeName>
</protein>
<keyword id="KW-0998">Cell outer membrane</keyword>
<keyword id="KW-0134">Cell wall</keyword>
<keyword id="KW-0472">Membrane</keyword>
<keyword id="KW-0964">Secreted</keyword>
<keyword id="KW-0732">Signal</keyword>
<keyword id="KW-0812">Transmembrane</keyword>
<keyword id="KW-1134">Transmembrane beta strand</keyword>
<organism>
    <name type="scientific">Chlamydia pneumoniae</name>
    <name type="common">Chlamydophila pneumoniae</name>
    <dbReference type="NCBI Taxonomy" id="83558"/>
    <lineage>
        <taxon>Bacteria</taxon>
        <taxon>Pseudomonadati</taxon>
        <taxon>Chlamydiota</taxon>
        <taxon>Chlamydiia</taxon>
        <taxon>Chlamydiales</taxon>
        <taxon>Chlamydiaceae</taxon>
        <taxon>Chlamydia/Chlamydophila group</taxon>
        <taxon>Chlamydia</taxon>
    </lineage>
</organism>
<feature type="signal peptide" evidence="1">
    <location>
        <begin position="1"/>
        <end position="26"/>
    </location>
</feature>
<feature type="chain" id="PRO_0000024738" description="Probable outer membrane protein pmp8">
    <location>
        <begin position="27"/>
        <end position="930"/>
    </location>
</feature>
<feature type="domain" description="Autotransporter" evidence="2">
    <location>
        <begin position="636"/>
        <end position="930"/>
    </location>
</feature>
<feature type="sequence variant" description="In strain: AR39, J138 and TW-183.">
    <original>T</original>
    <variation>A</variation>
    <location>
        <position position="177"/>
    </location>
</feature>
<comment type="subcellular location">
    <subcellularLocation>
        <location>Secreted</location>
        <location>Cell wall</location>
    </subcellularLocation>
    <subcellularLocation>
        <location evidence="3">Cell outer membrane</location>
        <topology evidence="3">Peripheral membrane protein</topology>
        <orientation evidence="3">Extracellular side</orientation>
    </subcellularLocation>
</comment>
<comment type="developmental stage">
    <text>Elementary body.</text>
</comment>
<comment type="similarity">
    <text evidence="3">Belongs to the PMP outer membrane protein family.</text>
</comment>